<organism>
    <name type="scientific">Shigella flexneri serotype X (strain 2002017)</name>
    <dbReference type="NCBI Taxonomy" id="591020"/>
    <lineage>
        <taxon>Bacteria</taxon>
        <taxon>Pseudomonadati</taxon>
        <taxon>Pseudomonadota</taxon>
        <taxon>Gammaproteobacteria</taxon>
        <taxon>Enterobacterales</taxon>
        <taxon>Enterobacteriaceae</taxon>
        <taxon>Shigella</taxon>
    </lineage>
</organism>
<sequence>MNIVDQQTFRDAMSCMGAAVNIITTDGPAGRAGFTASAVCSVTDTPPTLLVCLNRGASVWPVFNENRTLCVNTLSAGQEPLSNLFGGKTPMEHRFAAARWQTGVTGCPQLEEALVSFDCRISQVVSVGTHDILFCAIEAIHRHTTPYGLVWFDRSYHALMRPAC</sequence>
<dbReference type="EC" id="1.5.1.42" evidence="1"/>
<dbReference type="EMBL" id="CP001383">
    <property type="protein sequence ID" value="ADA73356.1"/>
    <property type="molecule type" value="Genomic_DNA"/>
</dbReference>
<dbReference type="RefSeq" id="WP_001028096.1">
    <property type="nucleotide sequence ID" value="NC_017328.1"/>
</dbReference>
<dbReference type="SMR" id="D2AC38"/>
<dbReference type="KEGG" id="sfe:SFxv_1096"/>
<dbReference type="PATRIC" id="fig|591020.3.peg.1170"/>
<dbReference type="HOGENOM" id="CLU_059021_2_2_6"/>
<dbReference type="GO" id="GO:0010181">
    <property type="term" value="F:FMN binding"/>
    <property type="evidence" value="ECO:0007669"/>
    <property type="project" value="InterPro"/>
</dbReference>
<dbReference type="GO" id="GO:0052874">
    <property type="term" value="F:FMN reductase (NADH) activity"/>
    <property type="evidence" value="ECO:0007669"/>
    <property type="project" value="UniProtKB-EC"/>
</dbReference>
<dbReference type="GO" id="GO:0008752">
    <property type="term" value="F:FMN reductase [NAD(P)H] activity"/>
    <property type="evidence" value="ECO:0007669"/>
    <property type="project" value="InterPro"/>
</dbReference>
<dbReference type="GO" id="GO:0042602">
    <property type="term" value="F:riboflavin reductase (NADPH) activity"/>
    <property type="evidence" value="ECO:0007669"/>
    <property type="project" value="UniProtKB-UniRule"/>
</dbReference>
<dbReference type="GO" id="GO:0019740">
    <property type="term" value="P:nitrogen utilization"/>
    <property type="evidence" value="ECO:0007669"/>
    <property type="project" value="UniProtKB-UniRule"/>
</dbReference>
<dbReference type="GO" id="GO:0006212">
    <property type="term" value="P:uracil catabolic process"/>
    <property type="evidence" value="ECO:0007669"/>
    <property type="project" value="UniProtKB-UniRule"/>
</dbReference>
<dbReference type="FunFam" id="2.30.110.10:FF:000002">
    <property type="entry name" value="FMN reductase (NADH) RutF"/>
    <property type="match status" value="1"/>
</dbReference>
<dbReference type="Gene3D" id="2.30.110.10">
    <property type="entry name" value="Electron Transport, Fmn-binding Protein, Chain A"/>
    <property type="match status" value="1"/>
</dbReference>
<dbReference type="HAMAP" id="MF_00833">
    <property type="entry name" value="RutF"/>
    <property type="match status" value="1"/>
</dbReference>
<dbReference type="InterPro" id="IPR002563">
    <property type="entry name" value="Flavin_Rdtase-like_dom"/>
</dbReference>
<dbReference type="InterPro" id="IPR050268">
    <property type="entry name" value="NADH-dep_flavin_reductase"/>
</dbReference>
<dbReference type="InterPro" id="IPR019917">
    <property type="entry name" value="RutF"/>
</dbReference>
<dbReference type="InterPro" id="IPR012349">
    <property type="entry name" value="Split_barrel_FMN-bd"/>
</dbReference>
<dbReference type="NCBIfam" id="TIGR03615">
    <property type="entry name" value="RutF"/>
    <property type="match status" value="1"/>
</dbReference>
<dbReference type="PANTHER" id="PTHR30466">
    <property type="entry name" value="FLAVIN REDUCTASE"/>
    <property type="match status" value="1"/>
</dbReference>
<dbReference type="PANTHER" id="PTHR30466:SF1">
    <property type="entry name" value="FMN REDUCTASE (NADH) RUTF"/>
    <property type="match status" value="1"/>
</dbReference>
<dbReference type="Pfam" id="PF01613">
    <property type="entry name" value="Flavin_Reduct"/>
    <property type="match status" value="1"/>
</dbReference>
<dbReference type="SMART" id="SM00903">
    <property type="entry name" value="Flavin_Reduct"/>
    <property type="match status" value="1"/>
</dbReference>
<dbReference type="SUPFAM" id="SSF50475">
    <property type="entry name" value="FMN-binding split barrel"/>
    <property type="match status" value="1"/>
</dbReference>
<protein>
    <recommendedName>
        <fullName evidence="1">FMN reductase (NADH) RutF</fullName>
        <ecNumber evidence="1">1.5.1.42</ecNumber>
    </recommendedName>
    <alternativeName>
        <fullName evidence="1">FMN reductase</fullName>
    </alternativeName>
    <alternativeName>
        <fullName evidence="1">NADH-flavin reductase RutF</fullName>
    </alternativeName>
    <alternativeName>
        <fullName evidence="1">NADH:flavin oxidoreductase</fullName>
    </alternativeName>
</protein>
<proteinExistence type="inferred from homology"/>
<accession>D2AC38</accession>
<evidence type="ECO:0000255" key="1">
    <source>
        <dbReference type="HAMAP-Rule" id="MF_00833"/>
    </source>
</evidence>
<name>RUTF_SHIF2</name>
<gene>
    <name evidence="1" type="primary">rutF</name>
    <name type="ordered locus">SFxv_1096</name>
</gene>
<comment type="function">
    <text evidence="1">Catalyzes the reduction of FMN to FMNH2 which is used to reduce pyrimidine by RutA via the Rut pathway.</text>
</comment>
<comment type="catalytic activity">
    <reaction evidence="1">
        <text>FMNH2 + NAD(+) = FMN + NADH + 2 H(+)</text>
        <dbReference type="Rhea" id="RHEA:21620"/>
        <dbReference type="ChEBI" id="CHEBI:15378"/>
        <dbReference type="ChEBI" id="CHEBI:57540"/>
        <dbReference type="ChEBI" id="CHEBI:57618"/>
        <dbReference type="ChEBI" id="CHEBI:57945"/>
        <dbReference type="ChEBI" id="CHEBI:58210"/>
        <dbReference type="EC" id="1.5.1.42"/>
    </reaction>
</comment>
<comment type="induction">
    <text evidence="1">Up-regulated by the nitrogen regulatory protein C (NtrC also called GlnG) and repressed by RutR.</text>
</comment>
<comment type="similarity">
    <text evidence="1">Belongs to the non-flavoprotein flavin reductase family. RutF subfamily.</text>
</comment>
<feature type="chain" id="PRO_0000403046" description="FMN reductase (NADH) RutF">
    <location>
        <begin position="1"/>
        <end position="164"/>
    </location>
</feature>
<keyword id="KW-0285">Flavoprotein</keyword>
<keyword id="KW-0288">FMN</keyword>
<keyword id="KW-0520">NAD</keyword>
<keyword id="KW-0560">Oxidoreductase</keyword>
<reference key="1">
    <citation type="journal article" date="2010" name="J. Clin. Microbiol.">
        <title>Emergence of a new multidrug-resistant serotype X variant in an epidemic clone of Shigella flexneri.</title>
        <authorList>
            <person name="Ye C."/>
            <person name="Lan R."/>
            <person name="Xia S."/>
            <person name="Zhang J."/>
            <person name="Sun Q."/>
            <person name="Zhang S."/>
            <person name="Jing H."/>
            <person name="Wang L."/>
            <person name="Li Z."/>
            <person name="Zhou Z."/>
            <person name="Zhao A."/>
            <person name="Cui Z."/>
            <person name="Cao J."/>
            <person name="Jin D."/>
            <person name="Huang L."/>
            <person name="Wang Y."/>
            <person name="Luo X."/>
            <person name="Bai X."/>
            <person name="Wang Y."/>
            <person name="Wang P."/>
            <person name="Xu Q."/>
            <person name="Xu J."/>
        </authorList>
    </citation>
    <scope>NUCLEOTIDE SEQUENCE [LARGE SCALE GENOMIC DNA]</scope>
    <source>
        <strain>2002017</strain>
    </source>
</reference>